<gene>
    <name type="primary">Uhrf1</name>
    <name type="ORF">Ac2-121</name>
</gene>
<keyword id="KW-0007">Acetylation</keyword>
<keyword id="KW-0131">Cell cycle</keyword>
<keyword id="KW-0156">Chromatin regulator</keyword>
<keyword id="KW-0227">DNA damage</keyword>
<keyword id="KW-0234">DNA repair</keyword>
<keyword id="KW-0238">DNA-binding</keyword>
<keyword id="KW-1017">Isopeptide bond</keyword>
<keyword id="KW-0479">Metal-binding</keyword>
<keyword id="KW-0539">Nucleus</keyword>
<keyword id="KW-0597">Phosphoprotein</keyword>
<keyword id="KW-1185">Reference proteome</keyword>
<keyword id="KW-0677">Repeat</keyword>
<keyword id="KW-0678">Repressor</keyword>
<keyword id="KW-0804">Transcription</keyword>
<keyword id="KW-0805">Transcription regulation</keyword>
<keyword id="KW-0808">Transferase</keyword>
<keyword id="KW-0832">Ubl conjugation</keyword>
<keyword id="KW-0833">Ubl conjugation pathway</keyword>
<keyword id="KW-0862">Zinc</keyword>
<keyword id="KW-0863">Zinc-finger</keyword>
<sequence length="774" mass="87449">MWIQVRTMDGKETHTVNSLSRLTKVQELRKKIEELFHVEPQLQRLFYRGKQMEDGHTLFDYDVRLNDTIQLLVRQSLALPLSTKERDSELSDSDSGYGVGHSESDKSSTHGEGTADGDDKTVWEDTDLGLYKVNEYVDVRDNIFGAWFEAQVVQVQKKALSEEEPCSSSAIMAPEDDIMYHIKYDDYPEHGVDIVKAKNVRARARTVIPWEDLEVGQVVMANYNVDYPRKRGFWYDVEICRKRQTRTARELYGNVMLLNDSQLNNCRIIFVDEVLKIELPNERSPLIGSPSRRKSGPSCQYCKDDENKPCRKCACHICGGREAPEKQVLCDECDMAFHLYCLQPPLTCVPPEPEWYCPSCRTDSSEVVQAGEKLKKSKKKAKMASATSSSRRDWGKGMACVGRTTECTIVPANHFGPIPGVPVGTMWRFRVQVSESGVHRPHVAGIHGRSNDGAYSLVLAGGYEDDVDNGNFFTYTGSGGRDLSGNKRTAGQSSDQKLTNNNRALALNCHSPINEKGAEAEDWRQGKPVRVVRNMKGGKHSKYAPAEGNRYDGIYKVVKYWPEKGKSGFIVWRYLLRRDDTEPEPWTREGKDRTRQLGLTMQYPEGYLEALANKEKNRKRPAKALEQGPSSSKIGKSKRKSTGPATTSPRVSKKSKLEPYTLPLQQANLIKEDKGNAKLWDDVLSSLQDGPYQIFLSKVKEAFQCICCQELVFRPVTTVCQHNVCKDCLDRSFRAQVFSCPACRYDLDHSSPTRVNQPLQTILNQLFPGYGSGR</sequence>
<dbReference type="EC" id="2.3.2.27"/>
<dbReference type="EMBL" id="AY321334">
    <property type="protein sequence ID" value="AAP86266.1"/>
    <property type="status" value="ALT_INIT"/>
    <property type="molecule type" value="mRNA"/>
</dbReference>
<dbReference type="EMBL" id="BC099224">
    <property type="protein sequence ID" value="AAH99224.1"/>
    <property type="molecule type" value="mRNA"/>
</dbReference>
<dbReference type="RefSeq" id="NP_001008882.1">
    <property type="nucleotide sequence ID" value="NM_001008882.1"/>
</dbReference>
<dbReference type="RefSeq" id="NP_001380775.1">
    <property type="nucleotide sequence ID" value="NM_001393846.2"/>
</dbReference>
<dbReference type="RefSeq" id="XP_063123131.1">
    <property type="nucleotide sequence ID" value="XM_063267061.1"/>
</dbReference>
<dbReference type="RefSeq" id="XP_063123132.1">
    <property type="nucleotide sequence ID" value="XM_063267062.1"/>
</dbReference>
<dbReference type="SMR" id="Q7TPK1"/>
<dbReference type="FunCoup" id="Q7TPK1">
    <property type="interactions" value="382"/>
</dbReference>
<dbReference type="STRING" id="10116.ENSRNOP00000066794"/>
<dbReference type="iPTMnet" id="Q7TPK1"/>
<dbReference type="PhosphoSitePlus" id="Q7TPK1"/>
<dbReference type="jPOST" id="Q7TPK1"/>
<dbReference type="PaxDb" id="10116-ENSRNOP00000066794"/>
<dbReference type="GeneID" id="316129"/>
<dbReference type="AGR" id="RGD:1595855"/>
<dbReference type="RGD" id="1595855">
    <property type="gene designation" value="Uhrf1"/>
</dbReference>
<dbReference type="eggNOG" id="ENOG502QRDQ">
    <property type="taxonomic scope" value="Eukaryota"/>
</dbReference>
<dbReference type="InParanoid" id="Q7TPK1"/>
<dbReference type="PhylomeDB" id="Q7TPK1"/>
<dbReference type="UniPathway" id="UPA00143"/>
<dbReference type="PRO" id="PR:Q7TPK1"/>
<dbReference type="Proteomes" id="UP000002494">
    <property type="component" value="Unplaced"/>
</dbReference>
<dbReference type="GO" id="GO:0000785">
    <property type="term" value="C:chromatin"/>
    <property type="evidence" value="ECO:0000250"/>
    <property type="project" value="UniProtKB"/>
</dbReference>
<dbReference type="GO" id="GO:0000791">
    <property type="term" value="C:euchromatin"/>
    <property type="evidence" value="ECO:0000250"/>
    <property type="project" value="UniProtKB"/>
</dbReference>
<dbReference type="GO" id="GO:0000792">
    <property type="term" value="C:heterochromatin"/>
    <property type="evidence" value="ECO:0000250"/>
    <property type="project" value="UniProtKB"/>
</dbReference>
<dbReference type="GO" id="GO:0016363">
    <property type="term" value="C:nuclear matrix"/>
    <property type="evidence" value="ECO:0000266"/>
    <property type="project" value="RGD"/>
</dbReference>
<dbReference type="GO" id="GO:0005634">
    <property type="term" value="C:nucleus"/>
    <property type="evidence" value="ECO:0000266"/>
    <property type="project" value="RGD"/>
</dbReference>
<dbReference type="GO" id="GO:0005657">
    <property type="term" value="C:replication fork"/>
    <property type="evidence" value="ECO:0000250"/>
    <property type="project" value="UniProtKB"/>
</dbReference>
<dbReference type="GO" id="GO:0000987">
    <property type="term" value="F:cis-regulatory region sequence-specific DNA binding"/>
    <property type="evidence" value="ECO:0000266"/>
    <property type="project" value="RGD"/>
</dbReference>
<dbReference type="GO" id="GO:0044729">
    <property type="term" value="F:hemi-methylated DNA-binding"/>
    <property type="evidence" value="ECO:0000250"/>
    <property type="project" value="UniProtKB"/>
</dbReference>
<dbReference type="GO" id="GO:0042393">
    <property type="term" value="F:histone binding"/>
    <property type="evidence" value="ECO:0000250"/>
    <property type="project" value="UniProtKB"/>
</dbReference>
<dbReference type="GO" id="GO:0141055">
    <property type="term" value="F:histone H3 ubiquitin ligase activity"/>
    <property type="evidence" value="ECO:0000266"/>
    <property type="project" value="RGD"/>
</dbReference>
<dbReference type="GO" id="GO:0062072">
    <property type="term" value="F:histone H3K9me2/3 reader activity"/>
    <property type="evidence" value="ECO:0000250"/>
    <property type="project" value="UniProtKB"/>
</dbReference>
<dbReference type="GO" id="GO:0042802">
    <property type="term" value="F:identical protein binding"/>
    <property type="evidence" value="ECO:0000266"/>
    <property type="project" value="RGD"/>
</dbReference>
<dbReference type="GO" id="GO:0008327">
    <property type="term" value="F:methyl-CpG binding"/>
    <property type="evidence" value="ECO:0000266"/>
    <property type="project" value="RGD"/>
</dbReference>
<dbReference type="GO" id="GO:0035064">
    <property type="term" value="F:methylated histone binding"/>
    <property type="evidence" value="ECO:0000266"/>
    <property type="project" value="RGD"/>
</dbReference>
<dbReference type="GO" id="GO:0003676">
    <property type="term" value="F:nucleic acid binding"/>
    <property type="evidence" value="ECO:0000266"/>
    <property type="project" value="RGD"/>
</dbReference>
<dbReference type="GO" id="GO:0061630">
    <property type="term" value="F:ubiquitin protein ligase activity"/>
    <property type="evidence" value="ECO:0000266"/>
    <property type="project" value="RGD"/>
</dbReference>
<dbReference type="GO" id="GO:0004842">
    <property type="term" value="F:ubiquitin-protein transferase activity"/>
    <property type="evidence" value="ECO:0000250"/>
    <property type="project" value="UniProtKB"/>
</dbReference>
<dbReference type="GO" id="GO:0008270">
    <property type="term" value="F:zinc ion binding"/>
    <property type="evidence" value="ECO:0000250"/>
    <property type="project" value="UniProtKB"/>
</dbReference>
<dbReference type="GO" id="GO:0006281">
    <property type="term" value="P:DNA repair"/>
    <property type="evidence" value="ECO:0007669"/>
    <property type="project" value="UniProtKB-KW"/>
</dbReference>
<dbReference type="GO" id="GO:0031507">
    <property type="term" value="P:heterochromatin formation"/>
    <property type="evidence" value="ECO:0000250"/>
    <property type="project" value="UniProtKB"/>
</dbReference>
<dbReference type="GO" id="GO:0090307">
    <property type="term" value="P:mitotic spindle assembly"/>
    <property type="evidence" value="ECO:0000266"/>
    <property type="project" value="RGD"/>
</dbReference>
<dbReference type="GO" id="GO:0044027">
    <property type="term" value="P:negative regulation of gene expression via chromosomal CpG island methylation"/>
    <property type="evidence" value="ECO:0000250"/>
    <property type="project" value="UniProtKB"/>
</dbReference>
<dbReference type="GO" id="GO:0000122">
    <property type="term" value="P:negative regulation of transcription by RNA polymerase II"/>
    <property type="evidence" value="ECO:0000250"/>
    <property type="project" value="UniProtKB"/>
</dbReference>
<dbReference type="GO" id="GO:0051247">
    <property type="term" value="P:positive regulation of protein metabolic process"/>
    <property type="evidence" value="ECO:0000266"/>
    <property type="project" value="RGD"/>
</dbReference>
<dbReference type="GO" id="GO:0051865">
    <property type="term" value="P:protein autoubiquitination"/>
    <property type="evidence" value="ECO:0000266"/>
    <property type="project" value="RGD"/>
</dbReference>
<dbReference type="GO" id="GO:0016567">
    <property type="term" value="P:protein ubiquitination"/>
    <property type="evidence" value="ECO:0000318"/>
    <property type="project" value="GO_Central"/>
</dbReference>
<dbReference type="GO" id="GO:0050678">
    <property type="term" value="P:regulation of epithelial cell proliferation"/>
    <property type="evidence" value="ECO:0000266"/>
    <property type="project" value="RGD"/>
</dbReference>
<dbReference type="GO" id="GO:0043434">
    <property type="term" value="P:response to peptide hormone"/>
    <property type="evidence" value="ECO:0000270"/>
    <property type="project" value="RGD"/>
</dbReference>
<dbReference type="GO" id="GO:0006511">
    <property type="term" value="P:ubiquitin-dependent protein catabolic process"/>
    <property type="evidence" value="ECO:0000250"/>
    <property type="project" value="UniProtKB"/>
</dbReference>
<dbReference type="CDD" id="cd15525">
    <property type="entry name" value="PHD_UHRF1_2"/>
    <property type="match status" value="1"/>
</dbReference>
<dbReference type="CDD" id="cd17122">
    <property type="entry name" value="Ubl_UHRF1"/>
    <property type="match status" value="1"/>
</dbReference>
<dbReference type="FunFam" id="2.30.280.10:FF:000001">
    <property type="entry name" value="E3 ubiquitin-protein ligase UHRF1 isoform 1"/>
    <property type="match status" value="1"/>
</dbReference>
<dbReference type="FunFam" id="2.30.30.140:FF:000068">
    <property type="entry name" value="E3 ubiquitin-protein ligase UHRF1 isoform 1"/>
    <property type="match status" value="1"/>
</dbReference>
<dbReference type="FunFam" id="3.10.20.90:FF:000143">
    <property type="entry name" value="E3 ubiquitin-protein ligase UHRF1 isoform 1"/>
    <property type="match status" value="1"/>
</dbReference>
<dbReference type="FunFam" id="3.30.40.10:FF:000066">
    <property type="entry name" value="E3 ubiquitin-protein ligase UHRF2 isoform X1"/>
    <property type="match status" value="1"/>
</dbReference>
<dbReference type="Gene3D" id="2.30.30.1150">
    <property type="match status" value="1"/>
</dbReference>
<dbReference type="Gene3D" id="2.30.30.140">
    <property type="match status" value="1"/>
</dbReference>
<dbReference type="Gene3D" id="3.10.20.90">
    <property type="entry name" value="Phosphatidylinositol 3-kinase Catalytic Subunit, Chain A, domain 1"/>
    <property type="match status" value="1"/>
</dbReference>
<dbReference type="Gene3D" id="2.30.280.10">
    <property type="entry name" value="SRA-YDG"/>
    <property type="match status" value="1"/>
</dbReference>
<dbReference type="Gene3D" id="3.30.40.10">
    <property type="entry name" value="Zinc/RING finger domain, C3HC4 (zinc finger)"/>
    <property type="match status" value="1"/>
</dbReference>
<dbReference type="InterPro" id="IPR015947">
    <property type="entry name" value="PUA-like_sf"/>
</dbReference>
<dbReference type="InterPro" id="IPR036987">
    <property type="entry name" value="SRA-YDG_sf"/>
</dbReference>
<dbReference type="InterPro" id="IPR003105">
    <property type="entry name" value="SRA_YDG"/>
</dbReference>
<dbReference type="InterPro" id="IPR021991">
    <property type="entry name" value="TTD_dom"/>
</dbReference>
<dbReference type="InterPro" id="IPR000626">
    <property type="entry name" value="Ubiquitin-like_dom"/>
</dbReference>
<dbReference type="InterPro" id="IPR029071">
    <property type="entry name" value="Ubiquitin-like_domsf"/>
</dbReference>
<dbReference type="InterPro" id="IPR047406">
    <property type="entry name" value="Ubl_UHRF1"/>
</dbReference>
<dbReference type="InterPro" id="IPR045134">
    <property type="entry name" value="UHRF1/2-like"/>
</dbReference>
<dbReference type="InterPro" id="IPR011011">
    <property type="entry name" value="Znf_FYVE_PHD"/>
</dbReference>
<dbReference type="InterPro" id="IPR001965">
    <property type="entry name" value="Znf_PHD"/>
</dbReference>
<dbReference type="InterPro" id="IPR019787">
    <property type="entry name" value="Znf_PHD-finger"/>
</dbReference>
<dbReference type="InterPro" id="IPR001841">
    <property type="entry name" value="Znf_RING"/>
</dbReference>
<dbReference type="InterPro" id="IPR013083">
    <property type="entry name" value="Znf_RING/FYVE/PHD"/>
</dbReference>
<dbReference type="InterPro" id="IPR017907">
    <property type="entry name" value="Znf_RING_CS"/>
</dbReference>
<dbReference type="PANTHER" id="PTHR14140">
    <property type="entry name" value="E3 UBIQUITIN-PROTEIN LIGASE UHRF-RELATED"/>
    <property type="match status" value="1"/>
</dbReference>
<dbReference type="PANTHER" id="PTHR14140:SF2">
    <property type="entry name" value="E3 UBIQUITIN-PROTEIN LIGASE UHRF1"/>
    <property type="match status" value="1"/>
</dbReference>
<dbReference type="Pfam" id="PF00628">
    <property type="entry name" value="PHD"/>
    <property type="match status" value="1"/>
</dbReference>
<dbReference type="Pfam" id="PF02182">
    <property type="entry name" value="SAD_SRA"/>
    <property type="match status" value="1"/>
</dbReference>
<dbReference type="Pfam" id="PF12148">
    <property type="entry name" value="TTD"/>
    <property type="match status" value="1"/>
</dbReference>
<dbReference type="Pfam" id="PF00240">
    <property type="entry name" value="ubiquitin"/>
    <property type="match status" value="1"/>
</dbReference>
<dbReference type="SMART" id="SM00249">
    <property type="entry name" value="PHD"/>
    <property type="match status" value="1"/>
</dbReference>
<dbReference type="SMART" id="SM00184">
    <property type="entry name" value="RING"/>
    <property type="match status" value="2"/>
</dbReference>
<dbReference type="SMART" id="SM00466">
    <property type="entry name" value="SRA"/>
    <property type="match status" value="1"/>
</dbReference>
<dbReference type="SMART" id="SM00213">
    <property type="entry name" value="UBQ"/>
    <property type="match status" value="1"/>
</dbReference>
<dbReference type="SUPFAM" id="SSF57903">
    <property type="entry name" value="FYVE/PHD zinc finger"/>
    <property type="match status" value="1"/>
</dbReference>
<dbReference type="SUPFAM" id="SSF88697">
    <property type="entry name" value="PUA domain-like"/>
    <property type="match status" value="1"/>
</dbReference>
<dbReference type="SUPFAM" id="SSF57850">
    <property type="entry name" value="RING/U-box"/>
    <property type="match status" value="1"/>
</dbReference>
<dbReference type="SUPFAM" id="SSF54236">
    <property type="entry name" value="Ubiquitin-like"/>
    <property type="match status" value="1"/>
</dbReference>
<dbReference type="PROSITE" id="PS50053">
    <property type="entry name" value="UBIQUITIN_2"/>
    <property type="match status" value="1"/>
</dbReference>
<dbReference type="PROSITE" id="PS51015">
    <property type="entry name" value="YDG"/>
    <property type="match status" value="1"/>
</dbReference>
<dbReference type="PROSITE" id="PS01359">
    <property type="entry name" value="ZF_PHD_1"/>
    <property type="match status" value="1"/>
</dbReference>
<dbReference type="PROSITE" id="PS50016">
    <property type="entry name" value="ZF_PHD_2"/>
    <property type="match status" value="1"/>
</dbReference>
<dbReference type="PROSITE" id="PS00518">
    <property type="entry name" value="ZF_RING_1"/>
    <property type="match status" value="1"/>
</dbReference>
<dbReference type="PROSITE" id="PS50089">
    <property type="entry name" value="ZF_RING_2"/>
    <property type="match status" value="1"/>
</dbReference>
<name>UHRF1_RAT</name>
<organism>
    <name type="scientific">Rattus norvegicus</name>
    <name type="common">Rat</name>
    <dbReference type="NCBI Taxonomy" id="10116"/>
    <lineage>
        <taxon>Eukaryota</taxon>
        <taxon>Metazoa</taxon>
        <taxon>Chordata</taxon>
        <taxon>Craniata</taxon>
        <taxon>Vertebrata</taxon>
        <taxon>Euteleostomi</taxon>
        <taxon>Mammalia</taxon>
        <taxon>Eutheria</taxon>
        <taxon>Euarchontoglires</taxon>
        <taxon>Glires</taxon>
        <taxon>Rodentia</taxon>
        <taxon>Myomorpha</taxon>
        <taxon>Muroidea</taxon>
        <taxon>Muridae</taxon>
        <taxon>Murinae</taxon>
        <taxon>Rattus</taxon>
    </lineage>
</organism>
<comment type="function">
    <text evidence="3">Multidomain protein that acts as a key epigenetic regulator by bridging DNA methylation and chromatin modification. Specifically recognizes and binds hemimethylated DNA at replication forks via its YDG domain and recruits DNMT1 methyltransferase to ensure faithful propagation of the DNA methylation patterns through DNA replication. In addition to its role in maintenance of DNA methylation, also plays a key role in chromatin modification: through its tudor-like regions and PHD-type zinc fingers, specifically recognizes and binds histone H3 trimethylated at 'Lys-9' (H3K9me3) and unmethylated at 'Arg-2' (H3R2me0), respectively, and recruits chromatin proteins. Enriched in pericentric heterochromatin where it recruits different chromatin modifiers required for this chromatin replication. Also localizes to euchromatic regions where it negatively regulates transcription possibly by impacting DNA methylation and histone modifications. Has E3 ubiquitin-protein ligase activity by mediating the ubiquitination of target proteins such as histone H3 and PML. It is still unclear how E3 ubiquitin-protein ligase activity is related to its role in chromatin in vivo. Plays a role in DNA repair by cooperating with UHRF2 to ensure recruitment of FANCD2 to interstrand cross-links (ICLs) leading to FANCD2 activation. Plays a pivotal role in the establishment of correct spindle architecture by catalyzing the 'Lys-63'-linked ubiquitination of KIF11, thereby controlling KIF11 localization on the spindle.</text>
</comment>
<comment type="catalytic activity">
    <reaction evidence="3">
        <text>S-ubiquitinyl-[E2 ubiquitin-conjugating enzyme]-L-cysteine + [acceptor protein]-L-lysine = [E2 ubiquitin-conjugating enzyme]-L-cysteine + N(6)-ubiquitinyl-[acceptor protein]-L-lysine.</text>
        <dbReference type="EC" id="2.3.2.27"/>
    </reaction>
</comment>
<comment type="pathway">
    <text>Protein modification; protein ubiquitination.</text>
</comment>
<comment type="subunit">
    <text evidence="1 2 3">Interacts with DNMT3A and DNMT3B. Interacts with DNMT1; the interaction is direct. Interacts with USP7; leading to its deubiquitination. Interacts with histone H3. Interacts with HDAC1, but not with HDAC2. Interacts with BLTP3A. Interacts with PML. Interacts with EHMT2. Binds methylated CpG containing oligonucleotides (By similarity). Interacts with ZNF263; recruited to the SIX3 promoter along with other proteins involved in chromatin modification and transcriptional corepression where it contributes to transcriptional repression (By similarity). Interacts with UHRF2 (By similarity). Interacts with FANCD2 (By similarity). Interacts with TET1 isoform 2; this interaction induces the recruitment of TET1 isoform 2 to replicating heterochromatin (By similarity).</text>
</comment>
<comment type="subcellular location">
    <subcellularLocation>
        <location evidence="2 7">Nucleus</location>
    </subcellularLocation>
    <text evidence="2">Associated, through the YDG domain (also called SRA domain), with replicating DNA from early to late S phase, including at replicating pericentric heterochromatin (By similarity). Also localizes to euchromatic regions. In non-S-phase cells, homogenously distributed through the nucleus (By similarity).</text>
</comment>
<comment type="domain">
    <text evidence="1">The tudor-like regions specifically recognize and bind histone H3 unmethylated at 'Arg-2' (H3R2me0), while the PHD-type zinc finger specifically recognizes and binds histone H3 trimethylated at 'Lys-9' (H3K9me3). The tudor-like regions simultaneously recognizes H3K9me3 through a conserved aromatic cage in the first tudor-like subdomain and unmodified H3K4 (H3K4me0) within a groove between the tandem subdomains. The linker region plays a role in the formation of a histone H3-binding hole between the reader modules formed by the tudor-like regions and the PHD-type zinc finger by making extended contacts with the tandem tudor-like regions (By similarity).</text>
</comment>
<comment type="domain">
    <text evidence="1">The YDG domain (also named SRA domain) specifically recognizes and binds hemimethylated DNA at replication forks (DNA that is only methylated on the mother strand of replicating DNA). It contains a binding pocket that accommodates the 5-methylcytosine that is flipped out of the duplex DNA. 2 specialized loops reach through the resulting gap in the DNA from both the major and the minor grooves to read the other 3 bases of the CpG duplex. The major groove loop confers both specificity for the CpG dinucleotide and discrimination against methylation of deoxycytidine of the complementary strand. The YDG domain also recognizes and binds 5-hydroxymethylcytosine (5hmC) (By similarity).</text>
</comment>
<comment type="domain">
    <text evidence="1">The RING finger is required for ubiquitin ligase activity.</text>
</comment>
<comment type="PTM">
    <text evidence="1">Phosphorylation at Ser-295 of the linker region decreases the binding to H3K9me3. Phosphorylation at Ser-631 by CDK1 during M phase impairs interaction with USP7, preventing deubiquitination and leading to degradation by the proteasome (By similarity).</text>
</comment>
<comment type="PTM">
    <text evidence="1">Ubiquitinated; which leads to proteasomal degradation. Autoubiquitinated; interaction with USP7 leads to deubiquitination and prevents degradation. Ubiquitination and degradation takes place during M phase, when phosphorylation at Ser-631 prevents interaction with USP7 and subsequent deubiquitination. Polyubiquitination may be stimulated by DNA damage (By similarity).</text>
</comment>
<comment type="sequence caution" evidence="9">
    <conflict type="erroneous initiation">
        <sequence resource="EMBL-CDS" id="AAP86266"/>
    </conflict>
    <text>Extended N-terminus.</text>
</comment>
<feature type="chain" id="PRO_0000056146" description="E3 ubiquitin-protein ligase UHRF1">
    <location>
        <begin position="1"/>
        <end position="774"/>
    </location>
</feature>
<feature type="domain" description="Ubiquitin-like" evidence="6">
    <location>
        <begin position="1"/>
        <end position="78"/>
    </location>
</feature>
<feature type="domain" description="YDG" evidence="7">
    <location>
        <begin position="416"/>
        <end position="578"/>
    </location>
</feature>
<feature type="zinc finger region" description="PHD-type" evidence="4">
    <location>
        <begin position="296"/>
        <end position="363"/>
    </location>
</feature>
<feature type="zinc finger region" description="RING-type" evidence="5">
    <location>
        <begin position="705"/>
        <end position="744"/>
    </location>
</feature>
<feature type="region of interest" description="Disordered" evidence="8">
    <location>
        <begin position="83"/>
        <end position="120"/>
    </location>
</feature>
<feature type="region of interest" description="Tudor-like 1">
    <location>
        <begin position="129"/>
        <end position="205"/>
    </location>
</feature>
<feature type="region of interest" description="Tudor-like 2">
    <location>
        <begin position="212"/>
        <end position="280"/>
    </location>
</feature>
<feature type="region of interest" description="Linker" evidence="1">
    <location>
        <begin position="293"/>
        <end position="298"/>
    </location>
</feature>
<feature type="region of interest" description="Histone H3R2me0 binding" evidence="1">
    <location>
        <begin position="330"/>
        <end position="334"/>
    </location>
</feature>
<feature type="region of interest" description="Histone H3R2me0 binding" evidence="1">
    <location>
        <begin position="350"/>
        <end position="352"/>
    </location>
</feature>
<feature type="region of interest" description="Methyl-CpG binding and interaction with HDAC1" evidence="1">
    <location>
        <begin position="382"/>
        <end position="605"/>
    </location>
</feature>
<feature type="region of interest" description="Required to promote base flipping" evidence="1">
    <location>
        <begin position="442"/>
        <end position="443"/>
    </location>
</feature>
<feature type="region of interest" description="Required for formation of a 5-methylcytosine-binding pocket" evidence="1">
    <location>
        <begin position="463"/>
        <end position="466"/>
    </location>
</feature>
<feature type="region of interest" description="Required for formation of a 5-methylcytosine-binding pocket" evidence="1">
    <location>
        <begin position="475"/>
        <end position="478"/>
    </location>
</feature>
<feature type="region of interest" description="Disordered" evidence="8">
    <location>
        <begin position="616"/>
        <end position="657"/>
    </location>
</feature>
<feature type="binding site" evidence="1">
    <location>
        <begin position="460"/>
        <end position="461"/>
    </location>
    <ligand>
        <name>DNA</name>
        <dbReference type="ChEBI" id="CHEBI:16991"/>
    </ligand>
    <ligandPart>
        <name>5-methylcytosine group</name>
        <dbReference type="ChEBI" id="CHEBI:65274"/>
    </ligandPart>
</feature>
<feature type="binding site" evidence="1">
    <location>
        <position position="466"/>
    </location>
    <ligand>
        <name>DNA</name>
        <dbReference type="ChEBI" id="CHEBI:16991"/>
    </ligand>
    <ligandPart>
        <name>5-methylcytosine group</name>
        <dbReference type="ChEBI" id="CHEBI:65274"/>
    </ligandPart>
</feature>
<feature type="site" description="Histone H3K4me0 binding" evidence="1">
    <location>
        <position position="313"/>
    </location>
</feature>
<feature type="site" description="Histone H3R2me0 binding" evidence="1">
    <location>
        <position position="324"/>
    </location>
</feature>
<feature type="site" description="Histone H3R2me0 binding" evidence="1">
    <location>
        <position position="327"/>
    </location>
</feature>
<feature type="site" description="Required to confer preferential recognition of cytosine over thymine" evidence="1">
    <location>
        <position position="476"/>
    </location>
</feature>
<feature type="site" description="Required to discriminate between hemimethylated DNA versus symmetrically methylated DNA" evidence="1">
    <location>
        <position position="486"/>
    </location>
</feature>
<feature type="site" description="Required for affinity and specificity for 5-mCpG sequence" evidence="1">
    <location>
        <position position="488"/>
    </location>
</feature>
<feature type="modified residue" description="Phosphoserine" evidence="3">
    <location>
        <position position="76"/>
    </location>
</feature>
<feature type="modified residue" description="Phosphoserine" evidence="10">
    <location>
        <position position="91"/>
    </location>
</feature>
<feature type="modified residue" description="Phosphoserine" evidence="10">
    <location>
        <position position="93"/>
    </location>
</feature>
<feature type="modified residue" description="Phosphoserine" evidence="10">
    <location>
        <position position="95"/>
    </location>
</feature>
<feature type="modified residue" description="Phosphoserine" evidence="2">
    <location>
        <position position="161"/>
    </location>
</feature>
<feature type="modified residue" description="Phosphoserine" evidence="10">
    <location>
        <position position="284"/>
    </location>
</feature>
<feature type="modified residue" description="Phosphoserine; by PKA" evidence="3">
    <location>
        <position position="295"/>
    </location>
</feature>
<feature type="modified residue" description="Phosphoserine" evidence="3">
    <location>
        <position position="365"/>
    </location>
</feature>
<feature type="modified residue" description="N6-acetyllysine" evidence="3">
    <location>
        <position position="396"/>
    </location>
</feature>
<feature type="modified residue" description="Phosphoserine" evidence="2">
    <location>
        <position position="511"/>
    </location>
</feature>
<feature type="modified residue" description="N6-acetyllysine; alternate" evidence="3">
    <location>
        <position position="542"/>
    </location>
</feature>
<feature type="modified residue" description="Phosphoserine; by CDK1" evidence="3">
    <location>
        <position position="631"/>
    </location>
</feature>
<feature type="modified residue" description="Phosphoserine" evidence="3">
    <location>
        <position position="641"/>
    </location>
</feature>
<feature type="modified residue" description="Phosphoserine" evidence="2">
    <location>
        <position position="648"/>
    </location>
</feature>
<feature type="modified residue" description="Phosphoserine" evidence="10">
    <location>
        <position position="751"/>
    </location>
</feature>
<feature type="cross-link" description="Glycyl lysine isopeptide (Lys-Gly) (interchain with G-Cter in SUMO2)" evidence="3">
    <location>
        <position position="276"/>
    </location>
</feature>
<feature type="cross-link" description="Glycyl lysine isopeptide (Lys-Gly) (interchain with G-Cter in SUMO2)" evidence="3">
    <location>
        <position position="382"/>
    </location>
</feature>
<feature type="cross-link" description="Glycyl lysine isopeptide (Lys-Gly) (interchain with G-Cter in SUMO2); alternate" evidence="3">
    <location>
        <position position="542"/>
    </location>
</feature>
<feature type="cross-link" description="Glycyl lysine isopeptide (Lys-Gly) (interchain with G-Cter in SUMO2)" evidence="3">
    <location>
        <position position="656"/>
    </location>
</feature>
<proteinExistence type="evidence at protein level"/>
<protein>
    <recommendedName>
        <fullName>E3 ubiquitin-protein ligase UHRF1</fullName>
        <ecNumber>2.3.2.27</ecNumber>
    </recommendedName>
    <alternativeName>
        <fullName>Liver regeneration-related protein LRRG126</fullName>
    </alternativeName>
    <alternativeName>
        <fullName>RING-type E3 ubiquitin transferase UHRF1</fullName>
    </alternativeName>
    <alternativeName>
        <fullName>Ubiquitin-like PHD and RING finger domain-containing protein 1</fullName>
    </alternativeName>
    <alternativeName>
        <fullName>Ubiquitin-like-containing PHD and RING finger domains protein 1</fullName>
    </alternativeName>
</protein>
<accession>Q7TPK1</accession>
<accession>Q4FZR4</accession>
<reference key="1">
    <citation type="submission" date="2003-06" db="EMBL/GenBank/DDBJ databases">
        <title>Liver regeneration after PH.</title>
        <authorList>
            <person name="Xu C.S."/>
            <person name="Li W.Q."/>
            <person name="Li Y.C."/>
            <person name="Wang G.P."/>
            <person name="Chai L.Q."/>
            <person name="Yuan J.Y."/>
            <person name="Yang K.J."/>
            <person name="Yan H.M."/>
            <person name="Chang C.F."/>
            <person name="Zhao L.F."/>
            <person name="Ma H."/>
            <person name="Wang L."/>
            <person name="Wang S.F."/>
            <person name="Han H.P."/>
            <person name="Shi J.B."/>
            <person name="Rahman S."/>
            <person name="Wang Q.N."/>
            <person name="Zhang J.B."/>
        </authorList>
    </citation>
    <scope>NUCLEOTIDE SEQUENCE [LARGE SCALE MRNA]</scope>
    <source>
        <tissue>Liver</tissue>
    </source>
</reference>
<reference key="2">
    <citation type="journal article" date="2004" name="Genome Res.">
        <title>The status, quality, and expansion of the NIH full-length cDNA project: the Mammalian Gene Collection (MGC).</title>
        <authorList>
            <consortium name="The MGC Project Team"/>
        </authorList>
    </citation>
    <scope>NUCLEOTIDE SEQUENCE [LARGE SCALE MRNA] OF 381-774</scope>
    <source>
        <tissue>Thymus</tissue>
    </source>
</reference>
<reference key="3">
    <citation type="journal article" date="2012" name="Nat. Commun.">
        <title>Quantitative maps of protein phosphorylation sites across 14 different rat organs and tissues.</title>
        <authorList>
            <person name="Lundby A."/>
            <person name="Secher A."/>
            <person name="Lage K."/>
            <person name="Nordsborg N.B."/>
            <person name="Dmytriyev A."/>
            <person name="Lundby C."/>
            <person name="Olsen J.V."/>
        </authorList>
    </citation>
    <scope>PHOSPHORYLATION [LARGE SCALE ANALYSIS] AT SER-91; SER-93; SER-95; SER-284 AND SER-751</scope>
    <scope>IDENTIFICATION BY MASS SPECTROMETRY [LARGE SCALE ANALYSIS]</scope>
</reference>
<evidence type="ECO:0000250" key="1"/>
<evidence type="ECO:0000250" key="2">
    <source>
        <dbReference type="UniProtKB" id="Q8VDF2"/>
    </source>
</evidence>
<evidence type="ECO:0000250" key="3">
    <source>
        <dbReference type="UniProtKB" id="Q96T88"/>
    </source>
</evidence>
<evidence type="ECO:0000255" key="4">
    <source>
        <dbReference type="PROSITE-ProRule" id="PRU00146"/>
    </source>
</evidence>
<evidence type="ECO:0000255" key="5">
    <source>
        <dbReference type="PROSITE-ProRule" id="PRU00175"/>
    </source>
</evidence>
<evidence type="ECO:0000255" key="6">
    <source>
        <dbReference type="PROSITE-ProRule" id="PRU00214"/>
    </source>
</evidence>
<evidence type="ECO:0000255" key="7">
    <source>
        <dbReference type="PROSITE-ProRule" id="PRU00358"/>
    </source>
</evidence>
<evidence type="ECO:0000256" key="8">
    <source>
        <dbReference type="SAM" id="MobiDB-lite"/>
    </source>
</evidence>
<evidence type="ECO:0000305" key="9"/>
<evidence type="ECO:0007744" key="10">
    <source>
    </source>
</evidence>